<name>3NB4_TELDH</name>
<proteinExistence type="inferred from homology"/>
<reference key="1">
    <citation type="journal article" date="2008" name="Mol. Cell. Proteomics">
        <title>Evolution of an arsenal: structural and functional diversification of the venom system in the advanced snakes (Caenophidia).</title>
        <authorList>
            <person name="Fry B.G."/>
            <person name="Scheib H."/>
            <person name="van der Weerd L."/>
            <person name="Young B."/>
            <person name="McNaughtan J."/>
            <person name="Ramjan S.F.R."/>
            <person name="Vidal N."/>
            <person name="Poelmann R.E."/>
            <person name="Norman J.A."/>
        </authorList>
    </citation>
    <scope>NUCLEOTIDE SEQUENCE [LARGE SCALE MRNA]</scope>
    <source>
        <tissue>Venom gland</tissue>
    </source>
</reference>
<organism>
    <name type="scientific">Telescopus dhara</name>
    <name type="common">Egyptian catsnake</name>
    <dbReference type="NCBI Taxonomy" id="338837"/>
    <lineage>
        <taxon>Eukaryota</taxon>
        <taxon>Metazoa</taxon>
        <taxon>Chordata</taxon>
        <taxon>Craniata</taxon>
        <taxon>Vertebrata</taxon>
        <taxon>Euteleostomi</taxon>
        <taxon>Lepidosauria</taxon>
        <taxon>Squamata</taxon>
        <taxon>Bifurcata</taxon>
        <taxon>Unidentata</taxon>
        <taxon>Episquamata</taxon>
        <taxon>Toxicofera</taxon>
        <taxon>Serpentes</taxon>
        <taxon>Colubroidea</taxon>
        <taxon>Colubridae</taxon>
        <taxon>Colubrinae</taxon>
        <taxon>Telescopus</taxon>
    </lineage>
</organism>
<comment type="function">
    <text evidence="1">Potent postsynaptic neurotoxin. Displays readily reversible competitive antagonism at the nicotinic acetylcholine receptor (nAChR).</text>
</comment>
<comment type="subcellular location">
    <subcellularLocation>
        <location evidence="1">Secreted</location>
    </subcellularLocation>
</comment>
<comment type="tissue specificity">
    <text evidence="4">Expressed by the venom gland.</text>
</comment>
<comment type="similarity">
    <text evidence="4">Belongs to the three-finger toxin family. Ancestral subfamily. Boigatoxin sub-subfamily.</text>
</comment>
<dbReference type="EMBL" id="EU029686">
    <property type="protein sequence ID" value="ABU68486.1"/>
    <property type="molecule type" value="mRNA"/>
</dbReference>
<dbReference type="SMR" id="A7X3V0"/>
<dbReference type="GO" id="GO:0005576">
    <property type="term" value="C:extracellular region"/>
    <property type="evidence" value="ECO:0007669"/>
    <property type="project" value="UniProtKB-SubCell"/>
</dbReference>
<dbReference type="GO" id="GO:0030550">
    <property type="term" value="F:acetylcholine receptor inhibitor activity"/>
    <property type="evidence" value="ECO:0007669"/>
    <property type="project" value="UniProtKB-KW"/>
</dbReference>
<dbReference type="GO" id="GO:0099106">
    <property type="term" value="F:ion channel regulator activity"/>
    <property type="evidence" value="ECO:0007669"/>
    <property type="project" value="UniProtKB-KW"/>
</dbReference>
<dbReference type="GO" id="GO:0090729">
    <property type="term" value="F:toxin activity"/>
    <property type="evidence" value="ECO:0007669"/>
    <property type="project" value="UniProtKB-KW"/>
</dbReference>
<dbReference type="CDD" id="cd00206">
    <property type="entry name" value="TFP_snake_toxin"/>
    <property type="match status" value="1"/>
</dbReference>
<dbReference type="Gene3D" id="2.10.60.10">
    <property type="entry name" value="CD59"/>
    <property type="match status" value="1"/>
</dbReference>
<dbReference type="InterPro" id="IPR003571">
    <property type="entry name" value="Snake_3FTx"/>
</dbReference>
<dbReference type="InterPro" id="IPR045860">
    <property type="entry name" value="Snake_toxin-like_sf"/>
</dbReference>
<dbReference type="InterPro" id="IPR018354">
    <property type="entry name" value="Snake_toxin_con_site"/>
</dbReference>
<dbReference type="InterPro" id="IPR054131">
    <property type="entry name" value="Toxin_cobra-type"/>
</dbReference>
<dbReference type="Pfam" id="PF21947">
    <property type="entry name" value="Toxin_cobra-type"/>
    <property type="match status" value="1"/>
</dbReference>
<dbReference type="SUPFAM" id="SSF57302">
    <property type="entry name" value="Snake toxin-like"/>
    <property type="match status" value="1"/>
</dbReference>
<dbReference type="PROSITE" id="PS00272">
    <property type="entry name" value="SNAKE_TOXIN"/>
    <property type="match status" value="1"/>
</dbReference>
<sequence>MKTLLLALVVVAFMCLGSADQLGLGSQRIDWEQGQAIGPPHGLCVQCDRKTCKNCFKSERCQPYNRICYTLYKPDENGEMKWAVKGCAKTCPSAKPGERVKCCSSPRCNEV</sequence>
<accession>A7X3V0</accession>
<protein>
    <recommendedName>
        <fullName evidence="5">Toxin 3FTx-Tel4</fullName>
    </recommendedName>
</protein>
<keyword id="KW-0008">Acetylcholine receptor inhibiting toxin</keyword>
<keyword id="KW-1015">Disulfide bond</keyword>
<keyword id="KW-0872">Ion channel impairing toxin</keyword>
<keyword id="KW-0528">Neurotoxin</keyword>
<keyword id="KW-0629">Postsynaptic neurotoxin</keyword>
<keyword id="KW-0873">Pyrrolidone carboxylic acid</keyword>
<keyword id="KW-0964">Secreted</keyword>
<keyword id="KW-0732">Signal</keyword>
<keyword id="KW-0800">Toxin</keyword>
<feature type="signal peptide" evidence="3">
    <location>
        <begin position="1"/>
        <end position="19"/>
    </location>
</feature>
<feature type="propeptide" id="PRO_0000316187" evidence="1">
    <location>
        <begin position="20"/>
        <end position="34"/>
    </location>
</feature>
<feature type="chain" id="PRO_0000316188" description="Toxin 3FTx-Tel4">
    <location>
        <begin position="35"/>
        <end position="111"/>
    </location>
</feature>
<feature type="modified residue" description="Pyrrolidone carboxylic acid" evidence="1">
    <location>
        <position position="35"/>
    </location>
</feature>
<feature type="disulfide bond" evidence="2">
    <location>
        <begin position="44"/>
        <end position="68"/>
    </location>
</feature>
<feature type="disulfide bond" evidence="2">
    <location>
        <begin position="47"/>
        <end position="55"/>
    </location>
</feature>
<feature type="disulfide bond" evidence="2">
    <location>
        <begin position="61"/>
        <end position="87"/>
    </location>
</feature>
<feature type="disulfide bond" evidence="2">
    <location>
        <begin position="91"/>
        <end position="102"/>
    </location>
</feature>
<feature type="disulfide bond" evidence="2">
    <location>
        <begin position="103"/>
        <end position="108"/>
    </location>
</feature>
<evidence type="ECO:0000250" key="1"/>
<evidence type="ECO:0000250" key="2">
    <source>
        <dbReference type="UniProtKB" id="P81782"/>
    </source>
</evidence>
<evidence type="ECO:0000255" key="3"/>
<evidence type="ECO:0000305" key="4"/>
<evidence type="ECO:0000312" key="5">
    <source>
        <dbReference type="EMBL" id="ABU68486.1"/>
    </source>
</evidence>